<reference key="1">
    <citation type="submission" date="2006-12" db="EMBL/GenBank/DDBJ databases">
        <title>Complete sequence of chromosome 1 of Verminephrobacter eiseniae EF01-2.</title>
        <authorList>
            <person name="Copeland A."/>
            <person name="Lucas S."/>
            <person name="Lapidus A."/>
            <person name="Barry K."/>
            <person name="Detter J.C."/>
            <person name="Glavina del Rio T."/>
            <person name="Dalin E."/>
            <person name="Tice H."/>
            <person name="Pitluck S."/>
            <person name="Chertkov O."/>
            <person name="Brettin T."/>
            <person name="Bruce D."/>
            <person name="Han C."/>
            <person name="Tapia R."/>
            <person name="Gilna P."/>
            <person name="Schmutz J."/>
            <person name="Larimer F."/>
            <person name="Land M."/>
            <person name="Hauser L."/>
            <person name="Kyrpides N."/>
            <person name="Kim E."/>
            <person name="Stahl D."/>
            <person name="Richardson P."/>
        </authorList>
    </citation>
    <scope>NUCLEOTIDE SEQUENCE [LARGE SCALE GENOMIC DNA]</scope>
    <source>
        <strain>EF01-2</strain>
    </source>
</reference>
<sequence length="144" mass="15498">MKFLEFLGKRPPAAAPGPAPAPASAATASERGHAAEDLALAHLQAAGLQLVARNYRTPGRGGGEIDLVLRERDRTLVFVEVRNRSHGAFGGAGGSIGATKQRRIIFAAQHYLRRLPAPPPCRFDVVLVQEQEPVQWIKAAFEAQ</sequence>
<keyword id="KW-1185">Reference proteome</keyword>
<feature type="chain" id="PRO_0000336282" description="UPF0102 protein Veis_0630">
    <location>
        <begin position="1"/>
        <end position="144"/>
    </location>
</feature>
<feature type="region of interest" description="Disordered" evidence="2">
    <location>
        <begin position="11"/>
        <end position="31"/>
    </location>
</feature>
<accession>A1WFK6</accession>
<organism>
    <name type="scientific">Verminephrobacter eiseniae (strain EF01-2)</name>
    <dbReference type="NCBI Taxonomy" id="391735"/>
    <lineage>
        <taxon>Bacteria</taxon>
        <taxon>Pseudomonadati</taxon>
        <taxon>Pseudomonadota</taxon>
        <taxon>Betaproteobacteria</taxon>
        <taxon>Burkholderiales</taxon>
        <taxon>Comamonadaceae</taxon>
        <taxon>Verminephrobacter</taxon>
    </lineage>
</organism>
<dbReference type="EMBL" id="CP000542">
    <property type="protein sequence ID" value="ABM56413.1"/>
    <property type="molecule type" value="Genomic_DNA"/>
</dbReference>
<dbReference type="RefSeq" id="WP_011808427.1">
    <property type="nucleotide sequence ID" value="NC_008786.1"/>
</dbReference>
<dbReference type="SMR" id="A1WFK6"/>
<dbReference type="STRING" id="391735.Veis_0630"/>
<dbReference type="GeneID" id="76459332"/>
<dbReference type="KEGG" id="vei:Veis_0630"/>
<dbReference type="eggNOG" id="COG0792">
    <property type="taxonomic scope" value="Bacteria"/>
</dbReference>
<dbReference type="HOGENOM" id="CLU_115353_1_0_4"/>
<dbReference type="OrthoDB" id="9794876at2"/>
<dbReference type="Proteomes" id="UP000000374">
    <property type="component" value="Chromosome"/>
</dbReference>
<dbReference type="GO" id="GO:0003676">
    <property type="term" value="F:nucleic acid binding"/>
    <property type="evidence" value="ECO:0007669"/>
    <property type="project" value="InterPro"/>
</dbReference>
<dbReference type="Gene3D" id="3.40.1350.10">
    <property type="match status" value="1"/>
</dbReference>
<dbReference type="HAMAP" id="MF_00048">
    <property type="entry name" value="UPF0102"/>
    <property type="match status" value="1"/>
</dbReference>
<dbReference type="InterPro" id="IPR011335">
    <property type="entry name" value="Restrct_endonuc-II-like"/>
</dbReference>
<dbReference type="InterPro" id="IPR011856">
    <property type="entry name" value="tRNA_endonuc-like_dom_sf"/>
</dbReference>
<dbReference type="InterPro" id="IPR003509">
    <property type="entry name" value="UPF0102_YraN-like"/>
</dbReference>
<dbReference type="NCBIfam" id="NF009150">
    <property type="entry name" value="PRK12497.1-3"/>
    <property type="match status" value="1"/>
</dbReference>
<dbReference type="NCBIfam" id="TIGR00252">
    <property type="entry name" value="YraN family protein"/>
    <property type="match status" value="1"/>
</dbReference>
<dbReference type="PANTHER" id="PTHR34039">
    <property type="entry name" value="UPF0102 PROTEIN YRAN"/>
    <property type="match status" value="1"/>
</dbReference>
<dbReference type="PANTHER" id="PTHR34039:SF1">
    <property type="entry name" value="UPF0102 PROTEIN YRAN"/>
    <property type="match status" value="1"/>
</dbReference>
<dbReference type="Pfam" id="PF02021">
    <property type="entry name" value="UPF0102"/>
    <property type="match status" value="1"/>
</dbReference>
<dbReference type="SUPFAM" id="SSF52980">
    <property type="entry name" value="Restriction endonuclease-like"/>
    <property type="match status" value="1"/>
</dbReference>
<proteinExistence type="inferred from homology"/>
<evidence type="ECO:0000255" key="1">
    <source>
        <dbReference type="HAMAP-Rule" id="MF_00048"/>
    </source>
</evidence>
<evidence type="ECO:0000256" key="2">
    <source>
        <dbReference type="SAM" id="MobiDB-lite"/>
    </source>
</evidence>
<name>Y630_VEREI</name>
<protein>
    <recommendedName>
        <fullName evidence="1">UPF0102 protein Veis_0630</fullName>
    </recommendedName>
</protein>
<comment type="similarity">
    <text evidence="1">Belongs to the UPF0102 family.</text>
</comment>
<gene>
    <name type="ordered locus">Veis_0630</name>
</gene>